<protein>
    <recommendedName>
        <fullName evidence="1">Pyrroloquinoline-quinone synthase</fullName>
        <ecNumber evidence="1">1.3.3.11</ecNumber>
    </recommendedName>
    <alternativeName>
        <fullName evidence="1">Coenzyme PQQ synthesis protein C</fullName>
    </alternativeName>
    <alternativeName>
        <fullName evidence="1">Pyrroloquinoline quinone biosynthesis protein C</fullName>
    </alternativeName>
</protein>
<sequence>MSRAAMDRAEFERALRDKGRYYHIHHPFHVAMYEGRASREQIQGWVANRFYYQVNIPLKDAAILANCPDREVRREWIQRILDHDGAPGEAGGIEAWLRLAEAVGLEREQVLSEERVLPGVRFAVDAYVNFARRASWQEAASSSLTELFAPQIHQSRLDSWPRHYPWIEAAGYEYFRSRLAQARRDVEHGLRITLEHYRTREAQERMLDILQFKLDVLWSMLDAMSMAYELERPPYHTVTRERVWHRGLAS</sequence>
<comment type="function">
    <text evidence="1">Ring cyclization and eight-electron oxidation of 3a-(2-amino-2-carboxyethyl)-4,5-dioxo-4,5,6,7,8,9-hexahydroquinoline-7,9-dicarboxylic-acid to PQQ.</text>
</comment>
<comment type="catalytic activity">
    <reaction evidence="1">
        <text>6-(2-amino-2-carboxyethyl)-7,8-dioxo-1,2,3,4,7,8-hexahydroquinoline-2,4-dicarboxylate + 3 O2 = pyrroloquinoline quinone + 2 H2O2 + 2 H2O + H(+)</text>
        <dbReference type="Rhea" id="RHEA:10692"/>
        <dbReference type="ChEBI" id="CHEBI:15377"/>
        <dbReference type="ChEBI" id="CHEBI:15378"/>
        <dbReference type="ChEBI" id="CHEBI:15379"/>
        <dbReference type="ChEBI" id="CHEBI:16240"/>
        <dbReference type="ChEBI" id="CHEBI:58442"/>
        <dbReference type="ChEBI" id="CHEBI:58778"/>
        <dbReference type="EC" id="1.3.3.11"/>
    </reaction>
</comment>
<comment type="pathway">
    <text evidence="1">Cofactor biosynthesis; pyrroloquinoline quinone biosynthesis.</text>
</comment>
<comment type="similarity">
    <text evidence="1">Belongs to the PqqC family.</text>
</comment>
<dbReference type="EC" id="1.3.3.11" evidence="1"/>
<dbReference type="EMBL" id="FM209186">
    <property type="protein sequence ID" value="CAW28063.1"/>
    <property type="molecule type" value="Genomic_DNA"/>
</dbReference>
<dbReference type="RefSeq" id="WP_003111679.1">
    <property type="nucleotide sequence ID" value="NC_011770.1"/>
</dbReference>
<dbReference type="SMR" id="B7VAB8"/>
<dbReference type="KEGG" id="pag:PLES_33361"/>
<dbReference type="HOGENOM" id="CLU_080136_0_0_6"/>
<dbReference type="UniPathway" id="UPA00539"/>
<dbReference type="GO" id="GO:0033732">
    <property type="term" value="F:pyrroloquinoline-quinone synthase activity"/>
    <property type="evidence" value="ECO:0007669"/>
    <property type="project" value="UniProtKB-EC"/>
</dbReference>
<dbReference type="GO" id="GO:0018189">
    <property type="term" value="P:pyrroloquinoline quinone biosynthetic process"/>
    <property type="evidence" value="ECO:0007669"/>
    <property type="project" value="UniProtKB-UniRule"/>
</dbReference>
<dbReference type="GO" id="GO:0006790">
    <property type="term" value="P:sulfur compound metabolic process"/>
    <property type="evidence" value="ECO:0007669"/>
    <property type="project" value="UniProtKB-ARBA"/>
</dbReference>
<dbReference type="CDD" id="cd19370">
    <property type="entry name" value="TenA_PqqC"/>
    <property type="match status" value="1"/>
</dbReference>
<dbReference type="Gene3D" id="1.20.910.10">
    <property type="entry name" value="Heme oxygenase-like"/>
    <property type="match status" value="1"/>
</dbReference>
<dbReference type="HAMAP" id="MF_00654">
    <property type="entry name" value="PQQ_syn_PqqC"/>
    <property type="match status" value="1"/>
</dbReference>
<dbReference type="InterPro" id="IPR016084">
    <property type="entry name" value="Haem_Oase-like_multi-hlx"/>
</dbReference>
<dbReference type="InterPro" id="IPR011845">
    <property type="entry name" value="PqqC"/>
</dbReference>
<dbReference type="InterPro" id="IPR039068">
    <property type="entry name" value="PqqC-like"/>
</dbReference>
<dbReference type="InterPro" id="IPR004305">
    <property type="entry name" value="Thiaminase-2/PQQC"/>
</dbReference>
<dbReference type="NCBIfam" id="TIGR02111">
    <property type="entry name" value="PQQ_syn_pqqC"/>
    <property type="match status" value="1"/>
</dbReference>
<dbReference type="PANTHER" id="PTHR40279:SF3">
    <property type="entry name" value="4-AMINOBENZOATE SYNTHASE"/>
    <property type="match status" value="1"/>
</dbReference>
<dbReference type="PANTHER" id="PTHR40279">
    <property type="entry name" value="PQQC-LIKE PROTEIN"/>
    <property type="match status" value="1"/>
</dbReference>
<dbReference type="Pfam" id="PF03070">
    <property type="entry name" value="TENA_THI-4"/>
    <property type="match status" value="1"/>
</dbReference>
<dbReference type="SUPFAM" id="SSF48613">
    <property type="entry name" value="Heme oxygenase-like"/>
    <property type="match status" value="1"/>
</dbReference>
<name>PQQC_PSEA8</name>
<organism>
    <name type="scientific">Pseudomonas aeruginosa (strain LESB58)</name>
    <dbReference type="NCBI Taxonomy" id="557722"/>
    <lineage>
        <taxon>Bacteria</taxon>
        <taxon>Pseudomonadati</taxon>
        <taxon>Pseudomonadota</taxon>
        <taxon>Gammaproteobacteria</taxon>
        <taxon>Pseudomonadales</taxon>
        <taxon>Pseudomonadaceae</taxon>
        <taxon>Pseudomonas</taxon>
    </lineage>
</organism>
<gene>
    <name evidence="1" type="primary">pqqC</name>
    <name type="ordered locus">PLES_33361</name>
</gene>
<feature type="chain" id="PRO_1000131178" description="Pyrroloquinoline-quinone synthase">
    <location>
        <begin position="1"/>
        <end position="250"/>
    </location>
</feature>
<keyword id="KW-0560">Oxidoreductase</keyword>
<keyword id="KW-0884">PQQ biosynthesis</keyword>
<proteinExistence type="inferred from homology"/>
<accession>B7VAB8</accession>
<evidence type="ECO:0000255" key="1">
    <source>
        <dbReference type="HAMAP-Rule" id="MF_00654"/>
    </source>
</evidence>
<reference key="1">
    <citation type="journal article" date="2009" name="Genome Res.">
        <title>Newly introduced genomic prophage islands are critical determinants of in vivo competitiveness in the Liverpool epidemic strain of Pseudomonas aeruginosa.</title>
        <authorList>
            <person name="Winstanley C."/>
            <person name="Langille M.G.I."/>
            <person name="Fothergill J.L."/>
            <person name="Kukavica-Ibrulj I."/>
            <person name="Paradis-Bleau C."/>
            <person name="Sanschagrin F."/>
            <person name="Thomson N.R."/>
            <person name="Winsor G.L."/>
            <person name="Quail M.A."/>
            <person name="Lennard N."/>
            <person name="Bignell A."/>
            <person name="Clarke L."/>
            <person name="Seeger K."/>
            <person name="Saunders D."/>
            <person name="Harris D."/>
            <person name="Parkhill J."/>
            <person name="Hancock R.E.W."/>
            <person name="Brinkman F.S.L."/>
            <person name="Levesque R.C."/>
        </authorList>
    </citation>
    <scope>NUCLEOTIDE SEQUENCE [LARGE SCALE GENOMIC DNA]</scope>
    <source>
        <strain>LESB58</strain>
    </source>
</reference>